<dbReference type="EMBL" id="AE017126">
    <property type="protein sequence ID" value="AAQ00219.1"/>
    <property type="molecule type" value="Genomic_DNA"/>
</dbReference>
<dbReference type="RefSeq" id="NP_875566.1">
    <property type="nucleotide sequence ID" value="NC_005042.1"/>
</dbReference>
<dbReference type="RefSeq" id="WP_011125326.1">
    <property type="nucleotide sequence ID" value="NC_005042.1"/>
</dbReference>
<dbReference type="SMR" id="Q7VBC2"/>
<dbReference type="STRING" id="167539.Pro_1174"/>
<dbReference type="EnsemblBacteria" id="AAQ00219">
    <property type="protein sequence ID" value="AAQ00219"/>
    <property type="gene ID" value="Pro_1174"/>
</dbReference>
<dbReference type="KEGG" id="pma:Pro_1174"/>
<dbReference type="PATRIC" id="fig|167539.5.peg.1228"/>
<dbReference type="eggNOG" id="ENOG5030HFR">
    <property type="taxonomic scope" value="Bacteria"/>
</dbReference>
<dbReference type="HOGENOM" id="CLU_028310_0_0_3"/>
<dbReference type="OrthoDB" id="9429529at2"/>
<dbReference type="Proteomes" id="UP000001420">
    <property type="component" value="Chromosome"/>
</dbReference>
<dbReference type="GO" id="GO:0009522">
    <property type="term" value="C:photosystem I"/>
    <property type="evidence" value="ECO:0007669"/>
    <property type="project" value="UniProtKB-KW"/>
</dbReference>
<dbReference type="GO" id="GO:0009523">
    <property type="term" value="C:photosystem II"/>
    <property type="evidence" value="ECO:0007669"/>
    <property type="project" value="UniProtKB-KW"/>
</dbReference>
<dbReference type="GO" id="GO:0031676">
    <property type="term" value="C:plasma membrane-derived thylakoid membrane"/>
    <property type="evidence" value="ECO:0007669"/>
    <property type="project" value="UniProtKB-SubCell"/>
</dbReference>
<dbReference type="GO" id="GO:0016168">
    <property type="term" value="F:chlorophyll binding"/>
    <property type="evidence" value="ECO:0007669"/>
    <property type="project" value="UniProtKB-KW"/>
</dbReference>
<dbReference type="GO" id="GO:0009767">
    <property type="term" value="P:photosynthetic electron transport chain"/>
    <property type="evidence" value="ECO:0007669"/>
    <property type="project" value="InterPro"/>
</dbReference>
<dbReference type="InterPro" id="IPR000932">
    <property type="entry name" value="PS_antenna-like"/>
</dbReference>
<dbReference type="InterPro" id="IPR036001">
    <property type="entry name" value="PS_II_antenna-like_sf"/>
</dbReference>
<dbReference type="NCBIfam" id="TIGR03041">
    <property type="entry name" value="PS_antenn_a_b"/>
    <property type="match status" value="1"/>
</dbReference>
<dbReference type="Pfam" id="PF00421">
    <property type="entry name" value="PSII"/>
    <property type="match status" value="1"/>
</dbReference>
<dbReference type="SUPFAM" id="SSF161077">
    <property type="entry name" value="Photosystem II antenna protein-like"/>
    <property type="match status" value="1"/>
</dbReference>
<reference key="1">
    <citation type="journal article" date="2003" name="Proc. Natl. Acad. Sci. U.S.A.">
        <title>Genome sequence of the cyanobacterium Prochlorococcus marinus SS120, a nearly minimal oxyphototrophic genome.</title>
        <authorList>
            <person name="Dufresne A."/>
            <person name="Salanoubat M."/>
            <person name="Partensky F."/>
            <person name="Artiguenave F."/>
            <person name="Axmann I.M."/>
            <person name="Barbe V."/>
            <person name="Duprat S."/>
            <person name="Galperin M.Y."/>
            <person name="Koonin E.V."/>
            <person name="Le Gall F."/>
            <person name="Makarova K.S."/>
            <person name="Ostrowski M."/>
            <person name="Oztas S."/>
            <person name="Robert C."/>
            <person name="Rogozin I.B."/>
            <person name="Scanlan D.J."/>
            <person name="Tandeau de Marsac N."/>
            <person name="Weissenbach J."/>
            <person name="Wincker P."/>
            <person name="Wolf Y.I."/>
            <person name="Hess W.R."/>
        </authorList>
    </citation>
    <scope>NUCLEOTIDE SEQUENCE [LARGE SCALE GENOMIC DNA]</scope>
    <source>
        <strain>SARG / CCMP1375 / SS120</strain>
    </source>
</reference>
<reference key="2">
    <citation type="journal article" date="2003" name="Nature">
        <title>Low-light-adapted Prochlorococcus species possess specific antennae for each photosystem.</title>
        <authorList>
            <person name="Bibby T.S."/>
            <person name="Mary I."/>
            <person name="Nield J."/>
            <person name="Partensky F."/>
            <person name="Barber J."/>
        </authorList>
    </citation>
    <scope>REPRESSION UNDER IRON-STARVATION</scope>
    <source>
        <strain>SARG / CCMP1375 / SS120</strain>
    </source>
</reference>
<organism>
    <name type="scientific">Prochlorococcus marinus (strain SARG / CCMP1375 / SS120)</name>
    <dbReference type="NCBI Taxonomy" id="167539"/>
    <lineage>
        <taxon>Bacteria</taxon>
        <taxon>Bacillati</taxon>
        <taxon>Cyanobacteriota</taxon>
        <taxon>Cyanophyceae</taxon>
        <taxon>Synechococcales</taxon>
        <taxon>Prochlorococcaceae</taxon>
        <taxon>Prochlorococcus</taxon>
    </lineage>
</organism>
<accession>Q7VBC2</accession>
<keyword id="KW-0148">Chlorophyll</keyword>
<keyword id="KW-0157">Chromophore</keyword>
<keyword id="KW-0472">Membrane</keyword>
<keyword id="KW-0602">Photosynthesis</keyword>
<keyword id="KW-0603">Photosystem I</keyword>
<keyword id="KW-0604">Photosystem II</keyword>
<keyword id="KW-1185">Reference proteome</keyword>
<keyword id="KW-0793">Thylakoid</keyword>
<keyword id="KW-0812">Transmembrane</keyword>
<keyword id="KW-1133">Transmembrane helix</keyword>
<comment type="function">
    <text evidence="2">The antenna complex functions as a light receptor, it captures and delivers excitation energy to photosystems II and I. The Prochlorales pcb genes are not related to higher plant LHCs.</text>
</comment>
<comment type="cofactor">
    <cofactor evidence="2">
        <name>divinyl chlorophyll a</name>
        <dbReference type="ChEBI" id="CHEBI:73095"/>
    </cofactor>
</comment>
<comment type="cofactor">
    <cofactor evidence="2">
        <name>divinyl chlorophyll b</name>
        <dbReference type="ChEBI" id="CHEBI:73096"/>
    </cofactor>
</comment>
<comment type="subunit">
    <text evidence="2">The antenna complex consists of divinyl chlorophylls (a and b) and divinyl chlorophyll a/b binding proteins and binds more divinyl chlorophyll b than does the antenna complex from high-light-adapted Prochlorococcus.</text>
</comment>
<comment type="subcellular location">
    <subcellularLocation>
        <location evidence="2">Cellular thylakoid membrane</location>
        <topology evidence="1">Multi-pass membrane protein</topology>
    </subcellularLocation>
</comment>
<comment type="induction">
    <text evidence="4">Transcription decreases slightly upon iron starvation.</text>
</comment>
<comment type="miscellaneous">
    <text evidence="5">This low-light-adapted strain contains 8 pcb genes.</text>
</comment>
<comment type="similarity">
    <text evidence="6">Belongs to the PsbB/PsbC family. IsiA/Pcb subfamily.</text>
</comment>
<evidence type="ECO:0000250" key="1"/>
<evidence type="ECO:0000250" key="2">
    <source>
        <dbReference type="UniProtKB" id="Q6Q972"/>
    </source>
</evidence>
<evidence type="ECO:0000255" key="3"/>
<evidence type="ECO:0000269" key="4">
    <source>
    </source>
</evidence>
<evidence type="ECO:0000303" key="5">
    <source>
    </source>
</evidence>
<evidence type="ECO:0000305" key="6"/>
<sequence>MQTYGNPDVTYGWWVGNSVVTNRAGRFIGSHVGHTGIICFATGASCLWELSRFDSSVPMGHQSSIYLSHLASLGIGFDEAGVWTGAGVATIAIFHLIFSMVYGGAGLAHSLFFDPDLNEGPIGRVDKFKLEWDNPNNLTFILGHHLIFLGVANIWFVEWARVHGIYDPALGEVRTIFPGYGDFGMVWGHQFDFIKIDSLEDVMSGHAFLAFLQISGGAFHIATRQIGEYTKFKGDGLLSAEAVLSWSLAGLFLMGVVAAFWAASNTTVYPTEWYGEPLEFKFGISPYWADTGDTSDCKYFFGHTSRAALVNVQYYFAFFCLQGHLWHALRALGFDFRRIAKAIGGLTESTSS</sequence>
<protein>
    <recommendedName>
        <fullName>Divinyl chlorophyll a/b light-harvesting protein PcbH</fullName>
    </recommendedName>
</protein>
<feature type="chain" id="PRO_0000077545" description="Divinyl chlorophyll a/b light-harvesting protein PcbH">
    <location>
        <begin position="1"/>
        <end position="352"/>
    </location>
</feature>
<feature type="transmembrane region" description="Helical" evidence="3">
    <location>
        <begin position="27"/>
        <end position="47"/>
    </location>
</feature>
<feature type="transmembrane region" description="Helical" evidence="3">
    <location>
        <begin position="88"/>
        <end position="108"/>
    </location>
</feature>
<feature type="transmembrane region" description="Helical" evidence="3">
    <location>
        <begin position="140"/>
        <end position="160"/>
    </location>
</feature>
<feature type="transmembrane region" description="Helical" evidence="3">
    <location>
        <begin position="202"/>
        <end position="222"/>
    </location>
</feature>
<feature type="transmembrane region" description="Helical" evidence="3">
    <location>
        <begin position="242"/>
        <end position="262"/>
    </location>
</feature>
<feature type="transmembrane region" description="Helical" evidence="3">
    <location>
        <begin position="309"/>
        <end position="329"/>
    </location>
</feature>
<proteinExistence type="evidence at transcript level"/>
<name>PCBH_PROMA</name>
<gene>
    <name type="primary">pcbH</name>
    <name type="ordered locus">Pro_1174</name>
</gene>